<sequence>MNDMNAKKPALRVAIVGGGISGLALALSLCKHSHLNVQLFEAAPAFGEVGAGVSFGPNAVRAIVGLGLGQAYFQVADRTPQPWEDIWFEWRRGSDASYLGATIAGVGQSSVHRADFLDALVKHLPEGIAQFRKRATQIEQQGDELQVLFRDGTEYRCDLLIGRDGIKSALRSYVLEGQGQDHLEPRFSGTCAYRGMVDSLQLREAYRINGIDEHLVDVPQMYLGLYGHILTFPVRKGRIVNVVAFTSDRSQPEPTWPADAPWVREASQREMLDAFAGWGDARALLECIPAPTLWALHDLPELPGYVHGRVALIGDAAHAMLPHQGAGAGQGLEDAYFLARLLGDSRTETGNLPELLGAYDDLRRPHACRVQRTTVETGELYELRDPIVGADEQLVGEILATRFDWLWNHDLDADVAEARLRMGWEAHEQIALRQG</sequence>
<keyword id="KW-0058">Aromatic hydrocarbons catabolism</keyword>
<keyword id="KW-0274">FAD</keyword>
<keyword id="KW-0285">Flavoprotein</keyword>
<keyword id="KW-0503">Monooxygenase</keyword>
<keyword id="KW-0520">NAD</keyword>
<keyword id="KW-0560">Oxidoreductase</keyword>
<keyword id="KW-0614">Plasmid</keyword>
<accession>Q53552</accession>
<comment type="catalytic activity">
    <reaction>
        <text>salicylate + NADH + O2 + 2 H(+) = catechol + CO2 + NAD(+) + H2O</text>
        <dbReference type="Rhea" id="RHEA:11004"/>
        <dbReference type="ChEBI" id="CHEBI:15377"/>
        <dbReference type="ChEBI" id="CHEBI:15378"/>
        <dbReference type="ChEBI" id="CHEBI:15379"/>
        <dbReference type="ChEBI" id="CHEBI:16526"/>
        <dbReference type="ChEBI" id="CHEBI:18135"/>
        <dbReference type="ChEBI" id="CHEBI:30762"/>
        <dbReference type="ChEBI" id="CHEBI:57540"/>
        <dbReference type="ChEBI" id="CHEBI:57945"/>
        <dbReference type="EC" id="1.14.13.1"/>
    </reaction>
</comment>
<comment type="cofactor">
    <cofactor>
        <name>FAD</name>
        <dbReference type="ChEBI" id="CHEBI:57692"/>
    </cofactor>
</comment>
<comment type="pathway">
    <text>Aromatic compound metabolism; naphthalene degradation.</text>
</comment>
<gene>
    <name type="primary">nahG</name>
</gene>
<evidence type="ECO:0000255" key="1"/>
<reference key="1">
    <citation type="journal article" date="1996" name="Biochem. Biophys. Res. Commun.">
        <title>Nucleotide sequence of salicylate hydroxylase gene and its 5'-flanking region of Pseudomonas putida KF715.</title>
        <authorList>
            <person name="Lee J."/>
            <person name="Oh J."/>
            <person name="Min K.R."/>
            <person name="Kim Y."/>
        </authorList>
    </citation>
    <scope>NUCLEOTIDE SEQUENCE [GENOMIC DNA]</scope>
    <source>
        <strain>KF715</strain>
    </source>
</reference>
<protein>
    <recommendedName>
        <fullName>Salicylate hydroxylase</fullName>
        <ecNumber>1.14.13.1</ecNumber>
    </recommendedName>
    <alternativeName>
        <fullName>Salicylate 1-monooxygenase</fullName>
    </alternativeName>
</protein>
<proteinExistence type="predicted"/>
<feature type="chain" id="PRO_0000096804" description="Salicylate hydroxylase">
    <location>
        <begin position="1"/>
        <end position="435"/>
    </location>
</feature>
<feature type="binding site" evidence="1">
    <location>
        <begin position="12"/>
        <end position="41"/>
    </location>
    <ligand>
        <name>FAD</name>
        <dbReference type="ChEBI" id="CHEBI:57692"/>
    </ligand>
</feature>
<dbReference type="EC" id="1.14.13.1"/>
<dbReference type="EMBL" id="S80995">
    <property type="protein sequence ID" value="AAB35960.1"/>
    <property type="molecule type" value="Genomic_DNA"/>
</dbReference>
<dbReference type="PIR" id="JC4590">
    <property type="entry name" value="JC4590"/>
</dbReference>
<dbReference type="SMR" id="Q53552"/>
<dbReference type="UniPathway" id="UPA00082"/>
<dbReference type="GO" id="GO:0071949">
    <property type="term" value="F:FAD binding"/>
    <property type="evidence" value="ECO:0007669"/>
    <property type="project" value="InterPro"/>
</dbReference>
<dbReference type="GO" id="GO:0018658">
    <property type="term" value="F:salicylate 1-monooxygenase activity"/>
    <property type="evidence" value="ECO:0007669"/>
    <property type="project" value="UniProtKB-EC"/>
</dbReference>
<dbReference type="GO" id="GO:0009056">
    <property type="term" value="P:catabolic process"/>
    <property type="evidence" value="ECO:0007669"/>
    <property type="project" value="UniProtKB-KW"/>
</dbReference>
<dbReference type="GO" id="GO:0044550">
    <property type="term" value="P:secondary metabolite biosynthetic process"/>
    <property type="evidence" value="ECO:0007669"/>
    <property type="project" value="TreeGrafter"/>
</dbReference>
<dbReference type="Gene3D" id="3.50.50.60">
    <property type="entry name" value="FAD/NAD(P)-binding domain"/>
    <property type="match status" value="1"/>
</dbReference>
<dbReference type="InterPro" id="IPR002938">
    <property type="entry name" value="FAD-bd"/>
</dbReference>
<dbReference type="InterPro" id="IPR036188">
    <property type="entry name" value="FAD/NAD-bd_sf"/>
</dbReference>
<dbReference type="InterPro" id="IPR051104">
    <property type="entry name" value="FAD_monoxygenase"/>
</dbReference>
<dbReference type="InterPro" id="IPR017631">
    <property type="entry name" value="Salicylate_mOase"/>
</dbReference>
<dbReference type="NCBIfam" id="TIGR03219">
    <property type="entry name" value="salicylate_mono"/>
    <property type="match status" value="1"/>
</dbReference>
<dbReference type="PANTHER" id="PTHR46720:SF3">
    <property type="entry name" value="FAD-BINDING DOMAIN-CONTAINING PROTEIN-RELATED"/>
    <property type="match status" value="1"/>
</dbReference>
<dbReference type="PANTHER" id="PTHR46720">
    <property type="entry name" value="HYDROXYLASE, PUTATIVE (AFU_ORTHOLOGUE AFUA_3G01460)-RELATED"/>
    <property type="match status" value="1"/>
</dbReference>
<dbReference type="Pfam" id="PF01494">
    <property type="entry name" value="FAD_binding_3"/>
    <property type="match status" value="1"/>
</dbReference>
<dbReference type="Pfam" id="PF13450">
    <property type="entry name" value="NAD_binding_8"/>
    <property type="match status" value="1"/>
</dbReference>
<dbReference type="PRINTS" id="PR00420">
    <property type="entry name" value="RNGMNOXGNASE"/>
</dbReference>
<dbReference type="SUPFAM" id="SSF54373">
    <property type="entry name" value="FAD-linked reductases, C-terminal domain"/>
    <property type="match status" value="1"/>
</dbReference>
<dbReference type="SUPFAM" id="SSF51905">
    <property type="entry name" value="FAD/NAD(P)-binding domain"/>
    <property type="match status" value="1"/>
</dbReference>
<organism>
    <name type="scientific">Pseudomonas putida</name>
    <name type="common">Arthrobacter siderocapsulatus</name>
    <dbReference type="NCBI Taxonomy" id="303"/>
    <lineage>
        <taxon>Bacteria</taxon>
        <taxon>Pseudomonadati</taxon>
        <taxon>Pseudomonadota</taxon>
        <taxon>Gammaproteobacteria</taxon>
        <taxon>Pseudomonadales</taxon>
        <taxon>Pseudomonadaceae</taxon>
        <taxon>Pseudomonas</taxon>
    </lineage>
</organism>
<name>NHG2_PSEPU</name>